<proteinExistence type="inferred from homology"/>
<gene>
    <name evidence="1" type="primary">pyrI</name>
    <name type="ordered locus">Kcr_0153</name>
</gene>
<evidence type="ECO:0000255" key="1">
    <source>
        <dbReference type="HAMAP-Rule" id="MF_00002"/>
    </source>
</evidence>
<dbReference type="EMBL" id="CP000968">
    <property type="protein sequence ID" value="ACB06913.1"/>
    <property type="molecule type" value="Genomic_DNA"/>
</dbReference>
<dbReference type="RefSeq" id="WP_012308810.1">
    <property type="nucleotide sequence ID" value="NC_010482.1"/>
</dbReference>
<dbReference type="SMR" id="B1L384"/>
<dbReference type="FunCoup" id="B1L384">
    <property type="interactions" value="50"/>
</dbReference>
<dbReference type="STRING" id="374847.Kcr_0153"/>
<dbReference type="EnsemblBacteria" id="ACB06913">
    <property type="protein sequence ID" value="ACB06913"/>
    <property type="gene ID" value="Kcr_0153"/>
</dbReference>
<dbReference type="GeneID" id="6093442"/>
<dbReference type="KEGG" id="kcr:Kcr_0153"/>
<dbReference type="eggNOG" id="arCOG04229">
    <property type="taxonomic scope" value="Archaea"/>
</dbReference>
<dbReference type="HOGENOM" id="CLU_128576_0_0_2"/>
<dbReference type="InParanoid" id="B1L384"/>
<dbReference type="OrthoDB" id="7000at2157"/>
<dbReference type="PhylomeDB" id="B1L384"/>
<dbReference type="Proteomes" id="UP000001686">
    <property type="component" value="Chromosome"/>
</dbReference>
<dbReference type="GO" id="GO:0009347">
    <property type="term" value="C:aspartate carbamoyltransferase complex"/>
    <property type="evidence" value="ECO:0000318"/>
    <property type="project" value="GO_Central"/>
</dbReference>
<dbReference type="GO" id="GO:0046872">
    <property type="term" value="F:metal ion binding"/>
    <property type="evidence" value="ECO:0007669"/>
    <property type="project" value="UniProtKB-KW"/>
</dbReference>
<dbReference type="GO" id="GO:0006207">
    <property type="term" value="P:'de novo' pyrimidine nucleobase biosynthetic process"/>
    <property type="evidence" value="ECO:0000318"/>
    <property type="project" value="GO_Central"/>
</dbReference>
<dbReference type="GO" id="GO:0006221">
    <property type="term" value="P:pyrimidine nucleotide biosynthetic process"/>
    <property type="evidence" value="ECO:0007669"/>
    <property type="project" value="UniProtKB-UniRule"/>
</dbReference>
<dbReference type="Gene3D" id="2.30.30.20">
    <property type="entry name" value="Aspartate carbamoyltransferase regulatory subunit, C-terminal domain"/>
    <property type="match status" value="1"/>
</dbReference>
<dbReference type="Gene3D" id="3.30.70.140">
    <property type="entry name" value="Aspartate carbamoyltransferase regulatory subunit, N-terminal domain"/>
    <property type="match status" value="1"/>
</dbReference>
<dbReference type="HAMAP" id="MF_00002">
    <property type="entry name" value="Asp_carb_tr_reg"/>
    <property type="match status" value="1"/>
</dbReference>
<dbReference type="InterPro" id="IPR020545">
    <property type="entry name" value="Asp_carbamoyltransf_reg_N"/>
</dbReference>
<dbReference type="InterPro" id="IPR002801">
    <property type="entry name" value="Asp_carbamoylTrfase_reg"/>
</dbReference>
<dbReference type="InterPro" id="IPR020542">
    <property type="entry name" value="Asp_carbamoyltrfase_reg_C"/>
</dbReference>
<dbReference type="InterPro" id="IPR036792">
    <property type="entry name" value="Asp_carbatrfase_reg_C_sf"/>
</dbReference>
<dbReference type="InterPro" id="IPR036793">
    <property type="entry name" value="Asp_carbatrfase_reg_N_sf"/>
</dbReference>
<dbReference type="NCBIfam" id="TIGR00240">
    <property type="entry name" value="ATCase_reg"/>
    <property type="match status" value="1"/>
</dbReference>
<dbReference type="PANTHER" id="PTHR35805">
    <property type="entry name" value="ASPARTATE CARBAMOYLTRANSFERASE REGULATORY CHAIN"/>
    <property type="match status" value="1"/>
</dbReference>
<dbReference type="PANTHER" id="PTHR35805:SF1">
    <property type="entry name" value="ASPARTATE CARBAMOYLTRANSFERASE REGULATORY CHAIN"/>
    <property type="match status" value="1"/>
</dbReference>
<dbReference type="Pfam" id="PF01948">
    <property type="entry name" value="PyrI"/>
    <property type="match status" value="1"/>
</dbReference>
<dbReference type="Pfam" id="PF02748">
    <property type="entry name" value="PyrI_C"/>
    <property type="match status" value="1"/>
</dbReference>
<dbReference type="SUPFAM" id="SSF57825">
    <property type="entry name" value="Aspartate carbamoyltransferase, Regulatory-chain, C-terminal domain"/>
    <property type="match status" value="1"/>
</dbReference>
<dbReference type="SUPFAM" id="SSF54893">
    <property type="entry name" value="Aspartate carbamoyltransferase, Regulatory-chain, N-terminal domain"/>
    <property type="match status" value="1"/>
</dbReference>
<name>PYRI_KORCO</name>
<comment type="function">
    <text evidence="1">Involved in allosteric regulation of aspartate carbamoyltransferase.</text>
</comment>
<comment type="cofactor">
    <cofactor evidence="1">
        <name>Zn(2+)</name>
        <dbReference type="ChEBI" id="CHEBI:29105"/>
    </cofactor>
    <text evidence="1">Binds 1 zinc ion per subunit.</text>
</comment>
<comment type="subunit">
    <text evidence="1">Contains catalytic and regulatory chains.</text>
</comment>
<comment type="similarity">
    <text evidence="1">Belongs to the PyrI family.</text>
</comment>
<feature type="chain" id="PRO_1000088827" description="Aspartate carbamoyltransferase regulatory chain">
    <location>
        <begin position="1"/>
        <end position="157"/>
    </location>
</feature>
<feature type="binding site" evidence="1">
    <location>
        <position position="108"/>
    </location>
    <ligand>
        <name>Zn(2+)</name>
        <dbReference type="ChEBI" id="CHEBI:29105"/>
    </ligand>
</feature>
<feature type="binding site" evidence="1">
    <location>
        <position position="113"/>
    </location>
    <ligand>
        <name>Zn(2+)</name>
        <dbReference type="ChEBI" id="CHEBI:29105"/>
    </ligand>
</feature>
<feature type="binding site" evidence="1">
    <location>
        <position position="138"/>
    </location>
    <ligand>
        <name>Zn(2+)</name>
        <dbReference type="ChEBI" id="CHEBI:29105"/>
    </ligand>
</feature>
<feature type="binding site" evidence="1">
    <location>
        <position position="141"/>
    </location>
    <ligand>
        <name>Zn(2+)</name>
        <dbReference type="ChEBI" id="CHEBI:29105"/>
    </ligand>
</feature>
<accession>B1L384</accession>
<keyword id="KW-0479">Metal-binding</keyword>
<keyword id="KW-0665">Pyrimidine biosynthesis</keyword>
<keyword id="KW-1185">Reference proteome</keyword>
<keyword id="KW-0862">Zinc</keyword>
<sequence length="157" mass="17490">MKEELVVRRISDGTVIDHIPAGRALRVLKLLGITGERDGVVALVMNVPSKKLGKKDIVKIEGRELSKEEVDKISLIAPSATINIIRNFEVASKRRVELPRRVVGILRCLNPNCVTNAPREAVEPSFTLISESPLRMVCEYCGEYLREEDIIEQLSGV</sequence>
<organism>
    <name type="scientific">Korarchaeum cryptofilum (strain OPF8)</name>
    <dbReference type="NCBI Taxonomy" id="374847"/>
    <lineage>
        <taxon>Archaea</taxon>
        <taxon>Thermoproteota</taxon>
        <taxon>Candidatus Korarchaeia</taxon>
        <taxon>Candidatus Korarchaeales</taxon>
        <taxon>Candidatus Korarchaeaceae</taxon>
        <taxon>Candidatus Korarchaeum</taxon>
    </lineage>
</organism>
<protein>
    <recommendedName>
        <fullName evidence="1">Aspartate carbamoyltransferase regulatory chain</fullName>
    </recommendedName>
</protein>
<reference key="1">
    <citation type="journal article" date="2008" name="Proc. Natl. Acad. Sci. U.S.A.">
        <title>A korarchaeal genome reveals new insights into the evolution of the Archaea.</title>
        <authorList>
            <person name="Elkins J.G."/>
            <person name="Podar M."/>
            <person name="Graham D.E."/>
            <person name="Makarova K.S."/>
            <person name="Wolf Y."/>
            <person name="Randau L."/>
            <person name="Hedlund B.P."/>
            <person name="Brochier-Armanet C."/>
            <person name="Kunin V."/>
            <person name="Anderson I."/>
            <person name="Lapidus A."/>
            <person name="Goltsman E."/>
            <person name="Barry K."/>
            <person name="Koonin E.V."/>
            <person name="Hugenholtz P."/>
            <person name="Kyrpides N."/>
            <person name="Wanner G."/>
            <person name="Richardson P."/>
            <person name="Keller M."/>
            <person name="Stetter K.O."/>
        </authorList>
    </citation>
    <scope>NUCLEOTIDE SEQUENCE [LARGE SCALE GENOMIC DNA]</scope>
    <source>
        <strain>OPF8</strain>
    </source>
</reference>